<reference key="1">
    <citation type="journal article" date="2005" name="Nucleic Acids Res.">
        <title>Genome dynamics and diversity of Shigella species, the etiologic agents of bacillary dysentery.</title>
        <authorList>
            <person name="Yang F."/>
            <person name="Yang J."/>
            <person name="Zhang X."/>
            <person name="Chen L."/>
            <person name="Jiang Y."/>
            <person name="Yan Y."/>
            <person name="Tang X."/>
            <person name="Wang J."/>
            <person name="Xiong Z."/>
            <person name="Dong J."/>
            <person name="Xue Y."/>
            <person name="Zhu Y."/>
            <person name="Xu X."/>
            <person name="Sun L."/>
            <person name="Chen S."/>
            <person name="Nie H."/>
            <person name="Peng J."/>
            <person name="Xu J."/>
            <person name="Wang Y."/>
            <person name="Yuan Z."/>
            <person name="Wen Y."/>
            <person name="Yao Z."/>
            <person name="Shen Y."/>
            <person name="Qiang B."/>
            <person name="Hou Y."/>
            <person name="Yu J."/>
            <person name="Jin Q."/>
        </authorList>
    </citation>
    <scope>NUCLEOTIDE SEQUENCE [LARGE SCALE GENOMIC DNA]</scope>
    <source>
        <strain>Sd197</strain>
    </source>
</reference>
<keyword id="KW-0997">Cell inner membrane</keyword>
<keyword id="KW-1003">Cell membrane</keyword>
<keyword id="KW-0175">Coiled coil</keyword>
<keyword id="KW-0963">Cytoplasm</keyword>
<keyword id="KW-0472">Membrane</keyword>
<keyword id="KW-1185">Reference proteome</keyword>
<accession>Q32EZ0</accession>
<gene>
    <name evidence="1" type="primary">hflD</name>
    <name type="ordered locus">SDY_2020</name>
</gene>
<proteinExistence type="inferred from homology"/>
<name>HFLD_SHIDS</name>
<organism>
    <name type="scientific">Shigella dysenteriae serotype 1 (strain Sd197)</name>
    <dbReference type="NCBI Taxonomy" id="300267"/>
    <lineage>
        <taxon>Bacteria</taxon>
        <taxon>Pseudomonadati</taxon>
        <taxon>Pseudomonadota</taxon>
        <taxon>Gammaproteobacteria</taxon>
        <taxon>Enterobacterales</taxon>
        <taxon>Enterobacteriaceae</taxon>
        <taxon>Shigella</taxon>
    </lineage>
</organism>
<sequence>MAKNYYDITLALAGICQSARLVQQLAHQGHCDADALHVSLNSIIDMNPSSTLAVFGGSEANLRVGLETLLGVLNASSRQGLNAELTRYTLSLMVLERKLSSAKGALDTLGNRINGLQRQLEHFDLQSETLMSAMAAIYVDVISPLGPRIQVTGSPAVLQSPQVQAKVRATLLAGIRAAVLWHQVGGGRLQLMFSRNRLTTQAKQILAHLTPEL</sequence>
<protein>
    <recommendedName>
        <fullName evidence="1">High frequency lysogenization protein HflD homolog</fullName>
    </recommendedName>
</protein>
<evidence type="ECO:0000255" key="1">
    <source>
        <dbReference type="HAMAP-Rule" id="MF_00695"/>
    </source>
</evidence>
<dbReference type="EMBL" id="CP000034">
    <property type="protein sequence ID" value="ABB62115.1"/>
    <property type="molecule type" value="Genomic_DNA"/>
</dbReference>
<dbReference type="RefSeq" id="WP_001297479.1">
    <property type="nucleotide sequence ID" value="NC_007606.1"/>
</dbReference>
<dbReference type="RefSeq" id="YP_403606.1">
    <property type="nucleotide sequence ID" value="NC_007606.1"/>
</dbReference>
<dbReference type="SMR" id="Q32EZ0"/>
<dbReference type="STRING" id="300267.SDY_2020"/>
<dbReference type="EnsemblBacteria" id="ABB62115">
    <property type="protein sequence ID" value="ABB62115"/>
    <property type="gene ID" value="SDY_2020"/>
</dbReference>
<dbReference type="GeneID" id="93776278"/>
<dbReference type="KEGG" id="sdy:SDY_2020"/>
<dbReference type="PATRIC" id="fig|300267.13.peg.2433"/>
<dbReference type="HOGENOM" id="CLU_098920_0_0_6"/>
<dbReference type="Proteomes" id="UP000002716">
    <property type="component" value="Chromosome"/>
</dbReference>
<dbReference type="GO" id="GO:0005737">
    <property type="term" value="C:cytoplasm"/>
    <property type="evidence" value="ECO:0007669"/>
    <property type="project" value="UniProtKB-SubCell"/>
</dbReference>
<dbReference type="GO" id="GO:0005886">
    <property type="term" value="C:plasma membrane"/>
    <property type="evidence" value="ECO:0007669"/>
    <property type="project" value="UniProtKB-SubCell"/>
</dbReference>
<dbReference type="FunFam" id="1.10.3890.10:FF:000001">
    <property type="entry name" value="High frequency lysogenization protein HflD homolog"/>
    <property type="match status" value="1"/>
</dbReference>
<dbReference type="Gene3D" id="1.10.3890.10">
    <property type="entry name" value="HflD-like"/>
    <property type="match status" value="1"/>
</dbReference>
<dbReference type="HAMAP" id="MF_00695">
    <property type="entry name" value="HflD_protein"/>
    <property type="match status" value="1"/>
</dbReference>
<dbReference type="InterPro" id="IPR007451">
    <property type="entry name" value="HflD"/>
</dbReference>
<dbReference type="InterPro" id="IPR035932">
    <property type="entry name" value="HflD-like_sf"/>
</dbReference>
<dbReference type="NCBIfam" id="NF001245">
    <property type="entry name" value="PRK00218.1-1"/>
    <property type="match status" value="1"/>
</dbReference>
<dbReference type="NCBIfam" id="NF001246">
    <property type="entry name" value="PRK00218.1-2"/>
    <property type="match status" value="1"/>
</dbReference>
<dbReference type="NCBIfam" id="NF001248">
    <property type="entry name" value="PRK00218.1-4"/>
    <property type="match status" value="1"/>
</dbReference>
<dbReference type="NCBIfam" id="NF001249">
    <property type="entry name" value="PRK00218.1-5"/>
    <property type="match status" value="1"/>
</dbReference>
<dbReference type="PANTHER" id="PTHR38100">
    <property type="entry name" value="HIGH FREQUENCY LYSOGENIZATION PROTEIN HFLD"/>
    <property type="match status" value="1"/>
</dbReference>
<dbReference type="PANTHER" id="PTHR38100:SF1">
    <property type="entry name" value="HIGH FREQUENCY LYSOGENIZATION PROTEIN HFLD"/>
    <property type="match status" value="1"/>
</dbReference>
<dbReference type="Pfam" id="PF04356">
    <property type="entry name" value="DUF489"/>
    <property type="match status" value="1"/>
</dbReference>
<dbReference type="SUPFAM" id="SSF101322">
    <property type="entry name" value="YcfC-like"/>
    <property type="match status" value="1"/>
</dbReference>
<feature type="chain" id="PRO_1000045447" description="High frequency lysogenization protein HflD homolog">
    <location>
        <begin position="1"/>
        <end position="213"/>
    </location>
</feature>
<feature type="coiled-coil region" evidence="1">
    <location>
        <begin position="79"/>
        <end position="126"/>
    </location>
</feature>
<comment type="subcellular location">
    <subcellularLocation>
        <location>Cytoplasm</location>
    </subcellularLocation>
    <subcellularLocation>
        <location evidence="1">Cell inner membrane</location>
        <topology evidence="1">Peripheral membrane protein</topology>
        <orientation evidence="1">Cytoplasmic side</orientation>
    </subcellularLocation>
</comment>
<comment type="similarity">
    <text evidence="1">Belongs to the HflD family.</text>
</comment>